<feature type="chain" id="PRO_0000298575" description="NAD(P)H-quinone oxidoreductase subunit I, chloroplastic">
    <location>
        <begin position="1"/>
        <end position="180"/>
    </location>
</feature>
<feature type="domain" description="4Fe-4S ferredoxin-type 1" evidence="1">
    <location>
        <begin position="55"/>
        <end position="84"/>
    </location>
</feature>
<feature type="domain" description="4Fe-4S ferredoxin-type 2" evidence="1">
    <location>
        <begin position="95"/>
        <end position="124"/>
    </location>
</feature>
<feature type="binding site" evidence="1">
    <location>
        <position position="64"/>
    </location>
    <ligand>
        <name>[4Fe-4S] cluster</name>
        <dbReference type="ChEBI" id="CHEBI:49883"/>
        <label>1</label>
    </ligand>
</feature>
<feature type="binding site" evidence="1">
    <location>
        <position position="67"/>
    </location>
    <ligand>
        <name>[4Fe-4S] cluster</name>
        <dbReference type="ChEBI" id="CHEBI:49883"/>
        <label>1</label>
    </ligand>
</feature>
<feature type="binding site" evidence="1">
    <location>
        <position position="70"/>
    </location>
    <ligand>
        <name>[4Fe-4S] cluster</name>
        <dbReference type="ChEBI" id="CHEBI:49883"/>
        <label>1</label>
    </ligand>
</feature>
<feature type="binding site" evidence="1">
    <location>
        <position position="74"/>
    </location>
    <ligand>
        <name>[4Fe-4S] cluster</name>
        <dbReference type="ChEBI" id="CHEBI:49883"/>
        <label>2</label>
    </ligand>
</feature>
<feature type="binding site" evidence="1">
    <location>
        <position position="104"/>
    </location>
    <ligand>
        <name>[4Fe-4S] cluster</name>
        <dbReference type="ChEBI" id="CHEBI:49883"/>
        <label>2</label>
    </ligand>
</feature>
<feature type="binding site" evidence="1">
    <location>
        <position position="107"/>
    </location>
    <ligand>
        <name>[4Fe-4S] cluster</name>
        <dbReference type="ChEBI" id="CHEBI:49883"/>
        <label>2</label>
    </ligand>
</feature>
<feature type="binding site" evidence="1">
    <location>
        <position position="110"/>
    </location>
    <ligand>
        <name>[4Fe-4S] cluster</name>
        <dbReference type="ChEBI" id="CHEBI:49883"/>
        <label>2</label>
    </ligand>
</feature>
<feature type="binding site" evidence="1">
    <location>
        <position position="114"/>
    </location>
    <ligand>
        <name>[4Fe-4S] cluster</name>
        <dbReference type="ChEBI" id="CHEBI:49883"/>
        <label>1</label>
    </ligand>
</feature>
<sequence length="180" mass="21053">MFPMVTGFINYGQQTIRAARYIGQSFIITLSHTNRLPVTIQYPYEKSIASERFRGRIHFEFDKCIACEVCVRVCPIDLPVVDWRLEKNIKKKQLLNYSIDFGFCIFCGNCVEYCPTNCLSMTEEYELSTYDRHELNYNQIALGRLPMSVIGDYTIQTVLNWTQIKIDKNKLLDSRTITNY</sequence>
<evidence type="ECO:0000255" key="1">
    <source>
        <dbReference type="HAMAP-Rule" id="MF_01351"/>
    </source>
</evidence>
<accession>A6MMQ9</accession>
<proteinExistence type="inferred from homology"/>
<comment type="function">
    <text evidence="1">NDH shuttles electrons from NAD(P)H:plastoquinone, via FMN and iron-sulfur (Fe-S) centers, to quinones in the photosynthetic chain and possibly in a chloroplast respiratory chain. The immediate electron acceptor for the enzyme in this species is believed to be plastoquinone. Couples the redox reaction to proton translocation, and thus conserves the redox energy in a proton gradient.</text>
</comment>
<comment type="catalytic activity">
    <reaction evidence="1">
        <text>a plastoquinone + NADH + (n+1) H(+)(in) = a plastoquinol + NAD(+) + n H(+)(out)</text>
        <dbReference type="Rhea" id="RHEA:42608"/>
        <dbReference type="Rhea" id="RHEA-COMP:9561"/>
        <dbReference type="Rhea" id="RHEA-COMP:9562"/>
        <dbReference type="ChEBI" id="CHEBI:15378"/>
        <dbReference type="ChEBI" id="CHEBI:17757"/>
        <dbReference type="ChEBI" id="CHEBI:57540"/>
        <dbReference type="ChEBI" id="CHEBI:57945"/>
        <dbReference type="ChEBI" id="CHEBI:62192"/>
    </reaction>
</comment>
<comment type="catalytic activity">
    <reaction evidence="1">
        <text>a plastoquinone + NADPH + (n+1) H(+)(in) = a plastoquinol + NADP(+) + n H(+)(out)</text>
        <dbReference type="Rhea" id="RHEA:42612"/>
        <dbReference type="Rhea" id="RHEA-COMP:9561"/>
        <dbReference type="Rhea" id="RHEA-COMP:9562"/>
        <dbReference type="ChEBI" id="CHEBI:15378"/>
        <dbReference type="ChEBI" id="CHEBI:17757"/>
        <dbReference type="ChEBI" id="CHEBI:57783"/>
        <dbReference type="ChEBI" id="CHEBI:58349"/>
        <dbReference type="ChEBI" id="CHEBI:62192"/>
    </reaction>
</comment>
<comment type="cofactor">
    <cofactor evidence="1">
        <name>[4Fe-4S] cluster</name>
        <dbReference type="ChEBI" id="CHEBI:49883"/>
    </cofactor>
    <text evidence="1">Binds 2 [4Fe-4S] clusters per subunit.</text>
</comment>
<comment type="subunit">
    <text evidence="1">NDH is composed of at least 16 different subunits, 5 of which are encoded in the nucleus.</text>
</comment>
<comment type="subcellular location">
    <subcellularLocation>
        <location evidence="1">Plastid</location>
        <location evidence="1">Chloroplast thylakoid membrane</location>
        <topology evidence="1">Peripheral membrane protein</topology>
    </subcellularLocation>
</comment>
<comment type="similarity">
    <text evidence="1">Belongs to the complex I 23 kDa subunit family.</text>
</comment>
<gene>
    <name evidence="1" type="primary">ndhI</name>
</gene>
<dbReference type="EC" id="7.1.1.-" evidence="1"/>
<dbReference type="EMBL" id="EF380353">
    <property type="protein sequence ID" value="ABR01481.1"/>
    <property type="molecule type" value="Genomic_DNA"/>
</dbReference>
<dbReference type="RefSeq" id="YP_001294404.1">
    <property type="nucleotide sequence ID" value="NC_009601.1"/>
</dbReference>
<dbReference type="SMR" id="A6MMQ9"/>
<dbReference type="GeneID" id="5236559"/>
<dbReference type="GO" id="GO:0009535">
    <property type="term" value="C:chloroplast thylakoid membrane"/>
    <property type="evidence" value="ECO:0007669"/>
    <property type="project" value="UniProtKB-SubCell"/>
</dbReference>
<dbReference type="GO" id="GO:0051539">
    <property type="term" value="F:4 iron, 4 sulfur cluster binding"/>
    <property type="evidence" value="ECO:0007669"/>
    <property type="project" value="UniProtKB-KW"/>
</dbReference>
<dbReference type="GO" id="GO:0005506">
    <property type="term" value="F:iron ion binding"/>
    <property type="evidence" value="ECO:0007669"/>
    <property type="project" value="UniProtKB-UniRule"/>
</dbReference>
<dbReference type="GO" id="GO:0008137">
    <property type="term" value="F:NADH dehydrogenase (ubiquinone) activity"/>
    <property type="evidence" value="ECO:0007669"/>
    <property type="project" value="InterPro"/>
</dbReference>
<dbReference type="GO" id="GO:0048038">
    <property type="term" value="F:quinone binding"/>
    <property type="evidence" value="ECO:0007669"/>
    <property type="project" value="UniProtKB-KW"/>
</dbReference>
<dbReference type="GO" id="GO:0019684">
    <property type="term" value="P:photosynthesis, light reaction"/>
    <property type="evidence" value="ECO:0007669"/>
    <property type="project" value="UniProtKB-UniRule"/>
</dbReference>
<dbReference type="Gene3D" id="3.30.70.3270">
    <property type="match status" value="1"/>
</dbReference>
<dbReference type="HAMAP" id="MF_01351">
    <property type="entry name" value="NDH1_NuoI"/>
    <property type="match status" value="1"/>
</dbReference>
<dbReference type="InterPro" id="IPR017896">
    <property type="entry name" value="4Fe4S_Fe-S-bd"/>
</dbReference>
<dbReference type="InterPro" id="IPR017900">
    <property type="entry name" value="4Fe4S_Fe_S_CS"/>
</dbReference>
<dbReference type="InterPro" id="IPR010226">
    <property type="entry name" value="NADH_quinone_OxRdtase_chainI"/>
</dbReference>
<dbReference type="InterPro" id="IPR004497">
    <property type="entry name" value="NDHI"/>
</dbReference>
<dbReference type="NCBIfam" id="TIGR00403">
    <property type="entry name" value="ndhI"/>
    <property type="match status" value="1"/>
</dbReference>
<dbReference type="NCBIfam" id="TIGR01971">
    <property type="entry name" value="NuoI"/>
    <property type="match status" value="1"/>
</dbReference>
<dbReference type="NCBIfam" id="NF004537">
    <property type="entry name" value="PRK05888.1-3"/>
    <property type="match status" value="1"/>
</dbReference>
<dbReference type="PANTHER" id="PTHR47275">
    <property type="entry name" value="NAD(P)H-QUINONE OXIDOREDUCTASE SUBUNIT I, CHLOROPLASTIC"/>
    <property type="match status" value="1"/>
</dbReference>
<dbReference type="PANTHER" id="PTHR47275:SF1">
    <property type="entry name" value="NAD(P)H-QUINONE OXIDOREDUCTASE SUBUNIT I, CHLOROPLASTIC"/>
    <property type="match status" value="1"/>
</dbReference>
<dbReference type="Pfam" id="PF13237">
    <property type="entry name" value="Fer4_10"/>
    <property type="match status" value="1"/>
</dbReference>
<dbReference type="SUPFAM" id="SSF54862">
    <property type="entry name" value="4Fe-4S ferredoxins"/>
    <property type="match status" value="1"/>
</dbReference>
<dbReference type="PROSITE" id="PS00198">
    <property type="entry name" value="4FE4S_FER_1"/>
    <property type="match status" value="2"/>
</dbReference>
<dbReference type="PROSITE" id="PS51379">
    <property type="entry name" value="4FE4S_FER_2"/>
    <property type="match status" value="2"/>
</dbReference>
<organism>
    <name type="scientific">Dioscorea elephantipes</name>
    <name type="common">Elephant's foot yam</name>
    <name type="synonym">Testudinaria elephantipes</name>
    <dbReference type="NCBI Taxonomy" id="145284"/>
    <lineage>
        <taxon>Eukaryota</taxon>
        <taxon>Viridiplantae</taxon>
        <taxon>Streptophyta</taxon>
        <taxon>Embryophyta</taxon>
        <taxon>Tracheophyta</taxon>
        <taxon>Spermatophyta</taxon>
        <taxon>Magnoliopsida</taxon>
        <taxon>Liliopsida</taxon>
        <taxon>Dioscoreales</taxon>
        <taxon>Dioscoreaceae</taxon>
        <taxon>Dioscorea</taxon>
    </lineage>
</organism>
<protein>
    <recommendedName>
        <fullName evidence="1">NAD(P)H-quinone oxidoreductase subunit I, chloroplastic</fullName>
        <ecNumber evidence="1">7.1.1.-</ecNumber>
    </recommendedName>
    <alternativeName>
        <fullName evidence="1">NAD(P)H dehydrogenase subunit I</fullName>
        <shortName evidence="1">NDH subunit I</shortName>
    </alternativeName>
    <alternativeName>
        <fullName evidence="1">NADH-plastoquinone oxidoreductase subunit I</fullName>
    </alternativeName>
</protein>
<keyword id="KW-0004">4Fe-4S</keyword>
<keyword id="KW-0150">Chloroplast</keyword>
<keyword id="KW-0408">Iron</keyword>
<keyword id="KW-0411">Iron-sulfur</keyword>
<keyword id="KW-0472">Membrane</keyword>
<keyword id="KW-0479">Metal-binding</keyword>
<keyword id="KW-0520">NAD</keyword>
<keyword id="KW-0521">NADP</keyword>
<keyword id="KW-0934">Plastid</keyword>
<keyword id="KW-0618">Plastoquinone</keyword>
<keyword id="KW-0874">Quinone</keyword>
<keyword id="KW-0677">Repeat</keyword>
<keyword id="KW-0793">Thylakoid</keyword>
<keyword id="KW-1278">Translocase</keyword>
<reference key="1">
    <citation type="journal article" date="2007" name="Mol. Phylogenet. Evol.">
        <title>Phylogenetic and evolutionary implications of complete chloroplast genome sequences of four early-diverging angiosperms: Buxus (Buxaceae), Chloranthus (Chloranthaceae), Dioscorea (Dioscoreaceae), and Illicium (Schisandraceae).</title>
        <authorList>
            <person name="Hansen D.R."/>
            <person name="Dastidar S.G."/>
            <person name="Cai Z."/>
            <person name="Penaflor C."/>
            <person name="Kuehl J.V."/>
            <person name="Boore J.L."/>
            <person name="Jansen R.K."/>
        </authorList>
    </citation>
    <scope>NUCLEOTIDE SEQUENCE [LARGE SCALE GENOMIC DNA]</scope>
</reference>
<geneLocation type="chloroplast"/>
<name>NDHI_DIOEL</name>